<protein>
    <recommendedName>
        <fullName evidence="1">3-dehydroquinate synthase</fullName>
        <shortName evidence="1">DHQS</shortName>
        <ecNumber evidence="1">4.2.3.4</ecNumber>
    </recommendedName>
</protein>
<gene>
    <name evidence="1" type="primary">aroB</name>
    <name type="ordered locus">BAB1_2029</name>
</gene>
<evidence type="ECO:0000255" key="1">
    <source>
        <dbReference type="HAMAP-Rule" id="MF_00110"/>
    </source>
</evidence>
<organism>
    <name type="scientific">Brucella abortus (strain 2308)</name>
    <dbReference type="NCBI Taxonomy" id="359391"/>
    <lineage>
        <taxon>Bacteria</taxon>
        <taxon>Pseudomonadati</taxon>
        <taxon>Pseudomonadota</taxon>
        <taxon>Alphaproteobacteria</taxon>
        <taxon>Hyphomicrobiales</taxon>
        <taxon>Brucellaceae</taxon>
        <taxon>Brucella/Ochrobactrum group</taxon>
        <taxon>Brucella</taxon>
    </lineage>
</organism>
<accession>Q2YR43</accession>
<reference key="1">
    <citation type="journal article" date="2005" name="Infect. Immun.">
        <title>Whole-genome analyses of speciation events in pathogenic Brucellae.</title>
        <authorList>
            <person name="Chain P.S."/>
            <person name="Comerci D.J."/>
            <person name="Tolmasky M.E."/>
            <person name="Larimer F.W."/>
            <person name="Malfatti S.A."/>
            <person name="Vergez L.M."/>
            <person name="Aguero F."/>
            <person name="Land M.L."/>
            <person name="Ugalde R.A."/>
            <person name="Garcia E."/>
        </authorList>
    </citation>
    <scope>NUCLEOTIDE SEQUENCE [LARGE SCALE GENOMIC DNA]</scope>
    <source>
        <strain>2308</strain>
    </source>
</reference>
<dbReference type="EC" id="4.2.3.4" evidence="1"/>
<dbReference type="EMBL" id="AM040264">
    <property type="protein sequence ID" value="CAJ11985.1"/>
    <property type="molecule type" value="Genomic_DNA"/>
</dbReference>
<dbReference type="RefSeq" id="WP_002967019.1">
    <property type="nucleotide sequence ID" value="NZ_KN046823.1"/>
</dbReference>
<dbReference type="SMR" id="Q2YR43"/>
<dbReference type="STRING" id="359391.BAB1_2029"/>
<dbReference type="GeneID" id="93017659"/>
<dbReference type="KEGG" id="bmf:BAB1_2029"/>
<dbReference type="PATRIC" id="fig|359391.11.peg.1263"/>
<dbReference type="HOGENOM" id="CLU_001201_0_2_5"/>
<dbReference type="PhylomeDB" id="Q2YR43"/>
<dbReference type="UniPathway" id="UPA00053">
    <property type="reaction ID" value="UER00085"/>
</dbReference>
<dbReference type="Proteomes" id="UP000002719">
    <property type="component" value="Chromosome I"/>
</dbReference>
<dbReference type="GO" id="GO:0005737">
    <property type="term" value="C:cytoplasm"/>
    <property type="evidence" value="ECO:0007669"/>
    <property type="project" value="UniProtKB-SubCell"/>
</dbReference>
<dbReference type="GO" id="GO:0003856">
    <property type="term" value="F:3-dehydroquinate synthase activity"/>
    <property type="evidence" value="ECO:0007669"/>
    <property type="project" value="UniProtKB-UniRule"/>
</dbReference>
<dbReference type="GO" id="GO:0046872">
    <property type="term" value="F:metal ion binding"/>
    <property type="evidence" value="ECO:0007669"/>
    <property type="project" value="UniProtKB-KW"/>
</dbReference>
<dbReference type="GO" id="GO:0000166">
    <property type="term" value="F:nucleotide binding"/>
    <property type="evidence" value="ECO:0007669"/>
    <property type="project" value="UniProtKB-KW"/>
</dbReference>
<dbReference type="GO" id="GO:0008652">
    <property type="term" value="P:amino acid biosynthetic process"/>
    <property type="evidence" value="ECO:0007669"/>
    <property type="project" value="UniProtKB-KW"/>
</dbReference>
<dbReference type="GO" id="GO:0009073">
    <property type="term" value="P:aromatic amino acid family biosynthetic process"/>
    <property type="evidence" value="ECO:0007669"/>
    <property type="project" value="UniProtKB-KW"/>
</dbReference>
<dbReference type="GO" id="GO:0009423">
    <property type="term" value="P:chorismate biosynthetic process"/>
    <property type="evidence" value="ECO:0007669"/>
    <property type="project" value="UniProtKB-UniRule"/>
</dbReference>
<dbReference type="CDD" id="cd08195">
    <property type="entry name" value="DHQS"/>
    <property type="match status" value="1"/>
</dbReference>
<dbReference type="FunFam" id="3.40.50.1970:FF:000007">
    <property type="entry name" value="Pentafunctional AROM polypeptide"/>
    <property type="match status" value="1"/>
</dbReference>
<dbReference type="Gene3D" id="3.40.50.1970">
    <property type="match status" value="1"/>
</dbReference>
<dbReference type="Gene3D" id="1.20.1090.10">
    <property type="entry name" value="Dehydroquinate synthase-like - alpha domain"/>
    <property type="match status" value="1"/>
</dbReference>
<dbReference type="HAMAP" id="MF_00110">
    <property type="entry name" value="DHQ_synthase"/>
    <property type="match status" value="1"/>
</dbReference>
<dbReference type="InterPro" id="IPR050071">
    <property type="entry name" value="Dehydroquinate_synthase"/>
</dbReference>
<dbReference type="InterPro" id="IPR016037">
    <property type="entry name" value="DHQ_synth_AroB"/>
</dbReference>
<dbReference type="InterPro" id="IPR030963">
    <property type="entry name" value="DHQ_synth_fam"/>
</dbReference>
<dbReference type="InterPro" id="IPR030960">
    <property type="entry name" value="DHQS/DOIS_N"/>
</dbReference>
<dbReference type="InterPro" id="IPR056179">
    <property type="entry name" value="DHQS_C"/>
</dbReference>
<dbReference type="NCBIfam" id="TIGR01357">
    <property type="entry name" value="aroB"/>
    <property type="match status" value="1"/>
</dbReference>
<dbReference type="PANTHER" id="PTHR43622">
    <property type="entry name" value="3-DEHYDROQUINATE SYNTHASE"/>
    <property type="match status" value="1"/>
</dbReference>
<dbReference type="PANTHER" id="PTHR43622:SF7">
    <property type="entry name" value="3-DEHYDROQUINATE SYNTHASE, CHLOROPLASTIC"/>
    <property type="match status" value="1"/>
</dbReference>
<dbReference type="Pfam" id="PF01761">
    <property type="entry name" value="DHQ_synthase"/>
    <property type="match status" value="1"/>
</dbReference>
<dbReference type="Pfam" id="PF24621">
    <property type="entry name" value="DHQS_C"/>
    <property type="match status" value="1"/>
</dbReference>
<dbReference type="PIRSF" id="PIRSF001455">
    <property type="entry name" value="DHQ_synth"/>
    <property type="match status" value="1"/>
</dbReference>
<dbReference type="SUPFAM" id="SSF56796">
    <property type="entry name" value="Dehydroquinate synthase-like"/>
    <property type="match status" value="1"/>
</dbReference>
<comment type="function">
    <text evidence="1">Catalyzes the conversion of 3-deoxy-D-arabino-heptulosonate 7-phosphate (DAHP) to dehydroquinate (DHQ).</text>
</comment>
<comment type="catalytic activity">
    <reaction evidence="1">
        <text>7-phospho-2-dehydro-3-deoxy-D-arabino-heptonate = 3-dehydroquinate + phosphate</text>
        <dbReference type="Rhea" id="RHEA:21968"/>
        <dbReference type="ChEBI" id="CHEBI:32364"/>
        <dbReference type="ChEBI" id="CHEBI:43474"/>
        <dbReference type="ChEBI" id="CHEBI:58394"/>
        <dbReference type="EC" id="4.2.3.4"/>
    </reaction>
</comment>
<comment type="cofactor">
    <cofactor evidence="1">
        <name>Co(2+)</name>
        <dbReference type="ChEBI" id="CHEBI:48828"/>
    </cofactor>
    <cofactor evidence="1">
        <name>Zn(2+)</name>
        <dbReference type="ChEBI" id="CHEBI:29105"/>
    </cofactor>
    <text evidence="1">Binds 1 divalent metal cation per subunit. Can use either Co(2+) or Zn(2+).</text>
</comment>
<comment type="cofactor">
    <cofactor evidence="1">
        <name>NAD(+)</name>
        <dbReference type="ChEBI" id="CHEBI:57540"/>
    </cofactor>
</comment>
<comment type="pathway">
    <text evidence="1">Metabolic intermediate biosynthesis; chorismate biosynthesis; chorismate from D-erythrose 4-phosphate and phosphoenolpyruvate: step 2/7.</text>
</comment>
<comment type="subcellular location">
    <subcellularLocation>
        <location evidence="1">Cytoplasm</location>
    </subcellularLocation>
</comment>
<comment type="similarity">
    <text evidence="1">Belongs to the sugar phosphate cyclases superfamily. Dehydroquinate synthase family.</text>
</comment>
<feature type="chain" id="PRO_0000231072" description="3-dehydroquinate synthase">
    <location>
        <begin position="1"/>
        <end position="378"/>
    </location>
</feature>
<feature type="binding site" evidence="1">
    <location>
        <begin position="115"/>
        <end position="119"/>
    </location>
    <ligand>
        <name>NAD(+)</name>
        <dbReference type="ChEBI" id="CHEBI:57540"/>
    </ligand>
</feature>
<feature type="binding site" evidence="1">
    <location>
        <begin position="139"/>
        <end position="140"/>
    </location>
    <ligand>
        <name>NAD(+)</name>
        <dbReference type="ChEBI" id="CHEBI:57540"/>
    </ligand>
</feature>
<feature type="binding site" evidence="1">
    <location>
        <position position="152"/>
    </location>
    <ligand>
        <name>NAD(+)</name>
        <dbReference type="ChEBI" id="CHEBI:57540"/>
    </ligand>
</feature>
<feature type="binding site" evidence="1">
    <location>
        <position position="161"/>
    </location>
    <ligand>
        <name>NAD(+)</name>
        <dbReference type="ChEBI" id="CHEBI:57540"/>
    </ligand>
</feature>
<feature type="binding site" evidence="1">
    <location>
        <position position="194"/>
    </location>
    <ligand>
        <name>Zn(2+)</name>
        <dbReference type="ChEBI" id="CHEBI:29105"/>
    </ligand>
</feature>
<feature type="binding site" evidence="1">
    <location>
        <position position="256"/>
    </location>
    <ligand>
        <name>Zn(2+)</name>
        <dbReference type="ChEBI" id="CHEBI:29105"/>
    </ligand>
</feature>
<feature type="binding site" evidence="1">
    <location>
        <position position="275"/>
    </location>
    <ligand>
        <name>Zn(2+)</name>
        <dbReference type="ChEBI" id="CHEBI:29105"/>
    </ligand>
</feature>
<name>AROB_BRUA2</name>
<sequence>MNAPTTFADSVTVPVSLGDRSYDILIGKGLVERAGEEVAKRLKGVRVAIVTDENVAAVHLERLQASFARAGIDSTPVIVAPGEKSKSFATLETVTNAILVAKLERGDAVVALGGGVVGDLSGFVAGIVRRGMNFVQMPTSLLAQVDSSVGGKTGINTAHGKNLVGVFNQPQLVLADTQVLDTLSPREFRAGYAEVAKYGLIDRPDFFAWLEANWQEVFSGGAARTKAIAESCRSKAAVVARDERETGDRALLNLGHTFGHALESATGYDSSRLVHGEGVAIGMALAYRFSARMNLAGIEAAERVEAHLKAVGLPVSLAEVPGGLPPAEKLMDYIAQDKKVTRGTLTFILTHGIGQSFIAKDVPPAAVLEFLKERLAIA</sequence>
<proteinExistence type="inferred from homology"/>
<keyword id="KW-0028">Amino-acid biosynthesis</keyword>
<keyword id="KW-0057">Aromatic amino acid biosynthesis</keyword>
<keyword id="KW-0170">Cobalt</keyword>
<keyword id="KW-0963">Cytoplasm</keyword>
<keyword id="KW-0456">Lyase</keyword>
<keyword id="KW-0479">Metal-binding</keyword>
<keyword id="KW-0520">NAD</keyword>
<keyword id="KW-0547">Nucleotide-binding</keyword>
<keyword id="KW-1185">Reference proteome</keyword>
<keyword id="KW-0862">Zinc</keyword>